<organism>
    <name type="scientific">Shigella flexneri serotype 5b (strain 8401)</name>
    <dbReference type="NCBI Taxonomy" id="373384"/>
    <lineage>
        <taxon>Bacteria</taxon>
        <taxon>Pseudomonadati</taxon>
        <taxon>Pseudomonadota</taxon>
        <taxon>Gammaproteobacteria</taxon>
        <taxon>Enterobacterales</taxon>
        <taxon>Enterobacteriaceae</taxon>
        <taxon>Shigella</taxon>
    </lineage>
</organism>
<accession>Q0SXQ8</accession>
<protein>
    <recommendedName>
        <fullName evidence="1">Glycerol-3-phosphate acyltransferase</fullName>
        <shortName evidence="1">GPAT</shortName>
        <ecNumber evidence="1">2.3.1.15</ecNumber>
    </recommendedName>
</protein>
<evidence type="ECO:0000255" key="1">
    <source>
        <dbReference type="HAMAP-Rule" id="MF_00393"/>
    </source>
</evidence>
<reference key="1">
    <citation type="journal article" date="2006" name="BMC Genomics">
        <title>Complete genome sequence of Shigella flexneri 5b and comparison with Shigella flexneri 2a.</title>
        <authorList>
            <person name="Nie H."/>
            <person name="Yang F."/>
            <person name="Zhang X."/>
            <person name="Yang J."/>
            <person name="Chen L."/>
            <person name="Wang J."/>
            <person name="Xiong Z."/>
            <person name="Peng J."/>
            <person name="Sun L."/>
            <person name="Dong J."/>
            <person name="Xue Y."/>
            <person name="Xu X."/>
            <person name="Chen S."/>
            <person name="Yao Z."/>
            <person name="Shen Y."/>
            <person name="Jin Q."/>
        </authorList>
    </citation>
    <scope>NUCLEOTIDE SEQUENCE [LARGE SCALE GENOMIC DNA]</scope>
    <source>
        <strain>8401</strain>
    </source>
</reference>
<feature type="chain" id="PRO_1000049466" description="Glycerol-3-phosphate acyltransferase">
    <location>
        <begin position="1"/>
        <end position="827"/>
    </location>
</feature>
<feature type="short sequence motif" description="HXXXXD motif">
    <location>
        <begin position="325"/>
        <end position="330"/>
    </location>
</feature>
<dbReference type="EC" id="2.3.1.15" evidence="1"/>
<dbReference type="EMBL" id="CP000266">
    <property type="protein sequence ID" value="ABF06157.1"/>
    <property type="molecule type" value="Genomic_DNA"/>
</dbReference>
<dbReference type="SMR" id="Q0SXQ8"/>
<dbReference type="KEGG" id="sfv:SFV_4172"/>
<dbReference type="HOGENOM" id="CLU_015407_0_0_6"/>
<dbReference type="UniPathway" id="UPA00557">
    <property type="reaction ID" value="UER00612"/>
</dbReference>
<dbReference type="Proteomes" id="UP000000659">
    <property type="component" value="Chromosome"/>
</dbReference>
<dbReference type="GO" id="GO:0005886">
    <property type="term" value="C:plasma membrane"/>
    <property type="evidence" value="ECO:0007669"/>
    <property type="project" value="UniProtKB-SubCell"/>
</dbReference>
<dbReference type="GO" id="GO:0004366">
    <property type="term" value="F:glycerol-3-phosphate O-acyltransferase activity"/>
    <property type="evidence" value="ECO:0007669"/>
    <property type="project" value="UniProtKB-UniRule"/>
</dbReference>
<dbReference type="GO" id="GO:0016024">
    <property type="term" value="P:CDP-diacylglycerol biosynthetic process"/>
    <property type="evidence" value="ECO:0007669"/>
    <property type="project" value="UniProtKB-UniRule"/>
</dbReference>
<dbReference type="GO" id="GO:0006631">
    <property type="term" value="P:fatty acid metabolic process"/>
    <property type="evidence" value="ECO:0007669"/>
    <property type="project" value="TreeGrafter"/>
</dbReference>
<dbReference type="CDD" id="cd07993">
    <property type="entry name" value="LPLAT_DHAPAT-like"/>
    <property type="match status" value="1"/>
</dbReference>
<dbReference type="HAMAP" id="MF_00393">
    <property type="entry name" value="Glyc3P_acyltrans"/>
    <property type="match status" value="1"/>
</dbReference>
<dbReference type="InterPro" id="IPR022284">
    <property type="entry name" value="GPAT/DHAPAT"/>
</dbReference>
<dbReference type="InterPro" id="IPR045520">
    <property type="entry name" value="GPAT/DHAPAT_C"/>
</dbReference>
<dbReference type="InterPro" id="IPR041728">
    <property type="entry name" value="GPAT/DHAPAT_LPLAT"/>
</dbReference>
<dbReference type="InterPro" id="IPR028354">
    <property type="entry name" value="GPAT_PlsB"/>
</dbReference>
<dbReference type="InterPro" id="IPR002123">
    <property type="entry name" value="Plipid/glycerol_acylTrfase"/>
</dbReference>
<dbReference type="NCBIfam" id="TIGR03703">
    <property type="entry name" value="plsB"/>
    <property type="match status" value="1"/>
</dbReference>
<dbReference type="NCBIfam" id="NF003441">
    <property type="entry name" value="PRK04974.1"/>
    <property type="match status" value="1"/>
</dbReference>
<dbReference type="PANTHER" id="PTHR12563:SF17">
    <property type="entry name" value="DIHYDROXYACETONE PHOSPHATE ACYLTRANSFERASE"/>
    <property type="match status" value="1"/>
</dbReference>
<dbReference type="PANTHER" id="PTHR12563">
    <property type="entry name" value="GLYCEROL-3-PHOSPHATE ACYLTRANSFERASE"/>
    <property type="match status" value="1"/>
</dbReference>
<dbReference type="Pfam" id="PF01553">
    <property type="entry name" value="Acyltransferase"/>
    <property type="match status" value="1"/>
</dbReference>
<dbReference type="Pfam" id="PF19277">
    <property type="entry name" value="GPAT_C"/>
    <property type="match status" value="1"/>
</dbReference>
<dbReference type="PIRSF" id="PIRSF500064">
    <property type="entry name" value="GPAT"/>
    <property type="match status" value="1"/>
</dbReference>
<dbReference type="PIRSF" id="PIRSF000437">
    <property type="entry name" value="GPAT_DHAPAT"/>
    <property type="match status" value="1"/>
</dbReference>
<dbReference type="SMART" id="SM00563">
    <property type="entry name" value="PlsC"/>
    <property type="match status" value="1"/>
</dbReference>
<dbReference type="SUPFAM" id="SSF69593">
    <property type="entry name" value="Glycerol-3-phosphate (1)-acyltransferase"/>
    <property type="match status" value="1"/>
</dbReference>
<gene>
    <name evidence="1" type="primary">plsB</name>
    <name type="ordered locus">SFV_4172</name>
</gene>
<name>PLSB_SHIF8</name>
<comment type="catalytic activity">
    <reaction evidence="1">
        <text>sn-glycerol 3-phosphate + an acyl-CoA = a 1-acyl-sn-glycero-3-phosphate + CoA</text>
        <dbReference type="Rhea" id="RHEA:15325"/>
        <dbReference type="ChEBI" id="CHEBI:57287"/>
        <dbReference type="ChEBI" id="CHEBI:57597"/>
        <dbReference type="ChEBI" id="CHEBI:57970"/>
        <dbReference type="ChEBI" id="CHEBI:58342"/>
        <dbReference type="EC" id="2.3.1.15"/>
    </reaction>
</comment>
<comment type="pathway">
    <text evidence="1">Phospholipid metabolism; CDP-diacylglycerol biosynthesis; CDP-diacylglycerol from sn-glycerol 3-phosphate: step 1/3.</text>
</comment>
<comment type="subcellular location">
    <subcellularLocation>
        <location evidence="1">Cell inner membrane</location>
        <topology evidence="1">Peripheral membrane protein</topology>
        <orientation evidence="1">Cytoplasmic side</orientation>
    </subcellularLocation>
</comment>
<comment type="domain">
    <text evidence="1">The HXXXXD motif is essential for acyltransferase activity and may constitute the binding site for the phosphate moiety of the glycerol-3-phosphate.</text>
</comment>
<comment type="similarity">
    <text evidence="1">Belongs to the GPAT/DAPAT family.</text>
</comment>
<sequence length="827" mass="93730">MTFCYPCRAFALLTRGFTSFMSGWPRIYYKLLNLPLSILVKSKSIPADPAPELGLDTSRPIMYVLPYNSKADLLTLRAQCLAHDLPDPLEPLEIDGTLLPRYVFIHGGPRVFTYYTPKEESIKLFHDYLDLHRSNPNLDVQMVPVSVMFGRAPGREKGEVNPPLRMLNGVQKFFAVLWLGRDSFVRFSPSVSLRRMADEHGTDKTIAQKLARVARMHFARQRLAAVGPRLPARQDLFNKLLASRAIAKAVEDEARSKKISHEKAQQNAIALMEEIAANFSYEMIRLTDRILGFTWNRFYQGINVHNAERVRQLAHDGHELVYVPCHRSHMDYLLLSYVLYHQGLVPPHIAAGINLNFWPAGPIFRRLGAFFIRRTFKGNKLYSTVFREYLGELFSRGYSVEYFVEGGRSRTGRLLDPKTGTLSMTIQAMLRGGTRPITLIPIYIGYEHVMEVGTYAKELRGATKEKESLPQMLRGLSKLRNLGQGYVNFGEPMPLMTYLNQHVPDWRESIDPIEAVRPAWLTPTVNNIAADLMVRINNAGAANAMNLCCTALLASRQRSLTREQLTEQLNCYLDLMRNVPYSTDSTVPSASASELIDHALQMNKFEVEKDTIGDIIILPREQAVLMTYYRNNIAHMLVLPSLMAAIVTQHRHISRDVLMEHVNVLYPMLKAELFLRWDRDELPDVIDALANEMQRQGLITLQDDELHINPAHSRTLQLLAAGARETLQRYAITFWLLSANPSINRGTLEKESRTVAQRLSVLHGINAPEFFDKAVFSSLVLTLRDEGYISDSGDAEPAETMKVYQLLAELITSDVRLTIESATQGEG</sequence>
<keyword id="KW-0012">Acyltransferase</keyword>
<keyword id="KW-0997">Cell inner membrane</keyword>
<keyword id="KW-1003">Cell membrane</keyword>
<keyword id="KW-0444">Lipid biosynthesis</keyword>
<keyword id="KW-0443">Lipid metabolism</keyword>
<keyword id="KW-0472">Membrane</keyword>
<keyword id="KW-0594">Phospholipid biosynthesis</keyword>
<keyword id="KW-1208">Phospholipid metabolism</keyword>
<keyword id="KW-0808">Transferase</keyword>
<proteinExistence type="inferred from homology"/>